<sequence length="293" mass="32963">MTELGNDKAMNLLIITGMSGAGKTVAVQSLEDLGFFCVDNLPPVLIPKFAELVKQSGGSIERVALVIDLRGREFFENLAVTMESLNQMNGLSYHILYLDANDQTLVSRYKETRRRHPLSPNGSPLEGIHAERRLLEEMKGWAHQIIDTSQMKPVQLREKIINQYGQQGSPLTINVLSFGFKYGAPIDADLMFDVRFLPNPHYVEDLRPKTGCDPDVAEYVMQHKDTKEFLEKLTDFLGYTLPHYQREGKSQLVIGIGCTGGKHRSVAIAEHLGEAFGKDFSVRVSHRDMEKNK</sequence>
<comment type="function">
    <text evidence="1">Displays ATPase and GTPase activities.</text>
</comment>
<comment type="similarity">
    <text evidence="1">Belongs to the RapZ-like family.</text>
</comment>
<gene>
    <name type="ordered locus">BBR47_52620</name>
</gene>
<proteinExistence type="inferred from homology"/>
<organism>
    <name type="scientific">Brevibacillus brevis (strain 47 / JCM 6285 / NBRC 100599)</name>
    <dbReference type="NCBI Taxonomy" id="358681"/>
    <lineage>
        <taxon>Bacteria</taxon>
        <taxon>Bacillati</taxon>
        <taxon>Bacillota</taxon>
        <taxon>Bacilli</taxon>
        <taxon>Bacillales</taxon>
        <taxon>Paenibacillaceae</taxon>
        <taxon>Brevibacillus</taxon>
    </lineage>
</organism>
<name>Y5262_BREBN</name>
<feature type="chain" id="PRO_0000383221" description="Nucleotide-binding protein BBR47_52620">
    <location>
        <begin position="1"/>
        <end position="293"/>
    </location>
</feature>
<feature type="binding site" evidence="1">
    <location>
        <begin position="17"/>
        <end position="24"/>
    </location>
    <ligand>
        <name>ATP</name>
        <dbReference type="ChEBI" id="CHEBI:30616"/>
    </ligand>
</feature>
<feature type="binding site" evidence="1">
    <location>
        <begin position="68"/>
        <end position="71"/>
    </location>
    <ligand>
        <name>GTP</name>
        <dbReference type="ChEBI" id="CHEBI:37565"/>
    </ligand>
</feature>
<reference key="1">
    <citation type="submission" date="2005-03" db="EMBL/GenBank/DDBJ databases">
        <title>Brevibacillus brevis strain 47, complete genome.</title>
        <authorList>
            <person name="Hosoyama A."/>
            <person name="Yamada R."/>
            <person name="Hongo Y."/>
            <person name="Terui Y."/>
            <person name="Ankai A."/>
            <person name="Masuyama W."/>
            <person name="Sekiguchi M."/>
            <person name="Takeda T."/>
            <person name="Asano K."/>
            <person name="Ohji S."/>
            <person name="Ichikawa N."/>
            <person name="Narita S."/>
            <person name="Aoki N."/>
            <person name="Miura H."/>
            <person name="Matsushita S."/>
            <person name="Sekigawa T."/>
            <person name="Yamagata H."/>
            <person name="Yoshikawa H."/>
            <person name="Udaka S."/>
            <person name="Tanikawa S."/>
            <person name="Fujita N."/>
        </authorList>
    </citation>
    <scope>NUCLEOTIDE SEQUENCE [LARGE SCALE GENOMIC DNA]</scope>
    <source>
        <strain>47 / JCM 6285 / NBRC 100599</strain>
    </source>
</reference>
<dbReference type="EMBL" id="AP008955">
    <property type="protein sequence ID" value="BAH46239.1"/>
    <property type="molecule type" value="Genomic_DNA"/>
</dbReference>
<dbReference type="SMR" id="C0Z6P0"/>
<dbReference type="STRING" id="358681.BBR47_52620"/>
<dbReference type="KEGG" id="bbe:BBR47_52620"/>
<dbReference type="eggNOG" id="COG1660">
    <property type="taxonomic scope" value="Bacteria"/>
</dbReference>
<dbReference type="HOGENOM" id="CLU_059558_0_0_9"/>
<dbReference type="Proteomes" id="UP000001877">
    <property type="component" value="Chromosome"/>
</dbReference>
<dbReference type="GO" id="GO:0005524">
    <property type="term" value="F:ATP binding"/>
    <property type="evidence" value="ECO:0007669"/>
    <property type="project" value="UniProtKB-UniRule"/>
</dbReference>
<dbReference type="GO" id="GO:0005525">
    <property type="term" value="F:GTP binding"/>
    <property type="evidence" value="ECO:0007669"/>
    <property type="project" value="UniProtKB-UniRule"/>
</dbReference>
<dbReference type="Gene3D" id="3.40.50.300">
    <property type="entry name" value="P-loop containing nucleotide triphosphate hydrolases"/>
    <property type="match status" value="1"/>
</dbReference>
<dbReference type="HAMAP" id="MF_00636">
    <property type="entry name" value="RapZ_like"/>
    <property type="match status" value="1"/>
</dbReference>
<dbReference type="InterPro" id="IPR027417">
    <property type="entry name" value="P-loop_NTPase"/>
</dbReference>
<dbReference type="InterPro" id="IPR005337">
    <property type="entry name" value="RapZ-like"/>
</dbReference>
<dbReference type="InterPro" id="IPR053930">
    <property type="entry name" value="RapZ-like_N"/>
</dbReference>
<dbReference type="InterPro" id="IPR053931">
    <property type="entry name" value="RapZ_C"/>
</dbReference>
<dbReference type="NCBIfam" id="NF003828">
    <property type="entry name" value="PRK05416.1"/>
    <property type="match status" value="1"/>
</dbReference>
<dbReference type="PANTHER" id="PTHR30448">
    <property type="entry name" value="RNASE ADAPTER PROTEIN RAPZ"/>
    <property type="match status" value="1"/>
</dbReference>
<dbReference type="PANTHER" id="PTHR30448:SF0">
    <property type="entry name" value="RNASE ADAPTER PROTEIN RAPZ"/>
    <property type="match status" value="1"/>
</dbReference>
<dbReference type="Pfam" id="PF22740">
    <property type="entry name" value="PapZ_C"/>
    <property type="match status" value="1"/>
</dbReference>
<dbReference type="Pfam" id="PF03668">
    <property type="entry name" value="RapZ-like_N"/>
    <property type="match status" value="1"/>
</dbReference>
<dbReference type="PIRSF" id="PIRSF005052">
    <property type="entry name" value="P-loopkin"/>
    <property type="match status" value="1"/>
</dbReference>
<dbReference type="SUPFAM" id="SSF52540">
    <property type="entry name" value="P-loop containing nucleoside triphosphate hydrolases"/>
    <property type="match status" value="1"/>
</dbReference>
<keyword id="KW-0067">ATP-binding</keyword>
<keyword id="KW-0342">GTP-binding</keyword>
<keyword id="KW-0547">Nucleotide-binding</keyword>
<keyword id="KW-1185">Reference proteome</keyword>
<protein>
    <recommendedName>
        <fullName evidence="1">Nucleotide-binding protein BBR47_52620</fullName>
    </recommendedName>
</protein>
<evidence type="ECO:0000255" key="1">
    <source>
        <dbReference type="HAMAP-Rule" id="MF_00636"/>
    </source>
</evidence>
<accession>C0Z6P0</accession>